<reference key="1">
    <citation type="journal article" date="2000" name="Science">
        <title>The genome sequence of Drosophila melanogaster.</title>
        <authorList>
            <person name="Adams M.D."/>
            <person name="Celniker S.E."/>
            <person name="Holt R.A."/>
            <person name="Evans C.A."/>
            <person name="Gocayne J.D."/>
            <person name="Amanatides P.G."/>
            <person name="Scherer S.E."/>
            <person name="Li P.W."/>
            <person name="Hoskins R.A."/>
            <person name="Galle R.F."/>
            <person name="George R.A."/>
            <person name="Lewis S.E."/>
            <person name="Richards S."/>
            <person name="Ashburner M."/>
            <person name="Henderson S.N."/>
            <person name="Sutton G.G."/>
            <person name="Wortman J.R."/>
            <person name="Yandell M.D."/>
            <person name="Zhang Q."/>
            <person name="Chen L.X."/>
            <person name="Brandon R.C."/>
            <person name="Rogers Y.-H.C."/>
            <person name="Blazej R.G."/>
            <person name="Champe M."/>
            <person name="Pfeiffer B.D."/>
            <person name="Wan K.H."/>
            <person name="Doyle C."/>
            <person name="Baxter E.G."/>
            <person name="Helt G."/>
            <person name="Nelson C.R."/>
            <person name="Miklos G.L.G."/>
            <person name="Abril J.F."/>
            <person name="Agbayani A."/>
            <person name="An H.-J."/>
            <person name="Andrews-Pfannkoch C."/>
            <person name="Baldwin D."/>
            <person name="Ballew R.M."/>
            <person name="Basu A."/>
            <person name="Baxendale J."/>
            <person name="Bayraktaroglu L."/>
            <person name="Beasley E.M."/>
            <person name="Beeson K.Y."/>
            <person name="Benos P.V."/>
            <person name="Berman B.P."/>
            <person name="Bhandari D."/>
            <person name="Bolshakov S."/>
            <person name="Borkova D."/>
            <person name="Botchan M.R."/>
            <person name="Bouck J."/>
            <person name="Brokstein P."/>
            <person name="Brottier P."/>
            <person name="Burtis K.C."/>
            <person name="Busam D.A."/>
            <person name="Butler H."/>
            <person name="Cadieu E."/>
            <person name="Center A."/>
            <person name="Chandra I."/>
            <person name="Cherry J.M."/>
            <person name="Cawley S."/>
            <person name="Dahlke C."/>
            <person name="Davenport L.B."/>
            <person name="Davies P."/>
            <person name="de Pablos B."/>
            <person name="Delcher A."/>
            <person name="Deng Z."/>
            <person name="Mays A.D."/>
            <person name="Dew I."/>
            <person name="Dietz S.M."/>
            <person name="Dodson K."/>
            <person name="Doup L.E."/>
            <person name="Downes M."/>
            <person name="Dugan-Rocha S."/>
            <person name="Dunkov B.C."/>
            <person name="Dunn P."/>
            <person name="Durbin K.J."/>
            <person name="Evangelista C.C."/>
            <person name="Ferraz C."/>
            <person name="Ferriera S."/>
            <person name="Fleischmann W."/>
            <person name="Fosler C."/>
            <person name="Gabrielian A.E."/>
            <person name="Garg N.S."/>
            <person name="Gelbart W.M."/>
            <person name="Glasser K."/>
            <person name="Glodek A."/>
            <person name="Gong F."/>
            <person name="Gorrell J.H."/>
            <person name="Gu Z."/>
            <person name="Guan P."/>
            <person name="Harris M."/>
            <person name="Harris N.L."/>
            <person name="Harvey D.A."/>
            <person name="Heiman T.J."/>
            <person name="Hernandez J.R."/>
            <person name="Houck J."/>
            <person name="Hostin D."/>
            <person name="Houston K.A."/>
            <person name="Howland T.J."/>
            <person name="Wei M.-H."/>
            <person name="Ibegwam C."/>
            <person name="Jalali M."/>
            <person name="Kalush F."/>
            <person name="Karpen G.H."/>
            <person name="Ke Z."/>
            <person name="Kennison J.A."/>
            <person name="Ketchum K.A."/>
            <person name="Kimmel B.E."/>
            <person name="Kodira C.D."/>
            <person name="Kraft C.L."/>
            <person name="Kravitz S."/>
            <person name="Kulp D."/>
            <person name="Lai Z."/>
            <person name="Lasko P."/>
            <person name="Lei Y."/>
            <person name="Levitsky A.A."/>
            <person name="Li J.H."/>
            <person name="Li Z."/>
            <person name="Liang Y."/>
            <person name="Lin X."/>
            <person name="Liu X."/>
            <person name="Mattei B."/>
            <person name="McIntosh T.C."/>
            <person name="McLeod M.P."/>
            <person name="McPherson D."/>
            <person name="Merkulov G."/>
            <person name="Milshina N.V."/>
            <person name="Mobarry C."/>
            <person name="Morris J."/>
            <person name="Moshrefi A."/>
            <person name="Mount S.M."/>
            <person name="Moy M."/>
            <person name="Murphy B."/>
            <person name="Murphy L."/>
            <person name="Muzny D.M."/>
            <person name="Nelson D.L."/>
            <person name="Nelson D.R."/>
            <person name="Nelson K.A."/>
            <person name="Nixon K."/>
            <person name="Nusskern D.R."/>
            <person name="Pacleb J.M."/>
            <person name="Palazzolo M."/>
            <person name="Pittman G.S."/>
            <person name="Pan S."/>
            <person name="Pollard J."/>
            <person name="Puri V."/>
            <person name="Reese M.G."/>
            <person name="Reinert K."/>
            <person name="Remington K."/>
            <person name="Saunders R.D.C."/>
            <person name="Scheeler F."/>
            <person name="Shen H."/>
            <person name="Shue B.C."/>
            <person name="Siden-Kiamos I."/>
            <person name="Simpson M."/>
            <person name="Skupski M.P."/>
            <person name="Smith T.J."/>
            <person name="Spier E."/>
            <person name="Spradling A.C."/>
            <person name="Stapleton M."/>
            <person name="Strong R."/>
            <person name="Sun E."/>
            <person name="Svirskas R."/>
            <person name="Tector C."/>
            <person name="Turner R."/>
            <person name="Venter E."/>
            <person name="Wang A.H."/>
            <person name="Wang X."/>
            <person name="Wang Z.-Y."/>
            <person name="Wassarman D.A."/>
            <person name="Weinstock G.M."/>
            <person name="Weissenbach J."/>
            <person name="Williams S.M."/>
            <person name="Woodage T."/>
            <person name="Worley K.C."/>
            <person name="Wu D."/>
            <person name="Yang S."/>
            <person name="Yao Q.A."/>
            <person name="Ye J."/>
            <person name="Yeh R.-F."/>
            <person name="Zaveri J.S."/>
            <person name="Zhan M."/>
            <person name="Zhang G."/>
            <person name="Zhao Q."/>
            <person name="Zheng L."/>
            <person name="Zheng X.H."/>
            <person name="Zhong F.N."/>
            <person name="Zhong W."/>
            <person name="Zhou X."/>
            <person name="Zhu S.C."/>
            <person name="Zhu X."/>
            <person name="Smith H.O."/>
            <person name="Gibbs R.A."/>
            <person name="Myers E.W."/>
            <person name="Rubin G.M."/>
            <person name="Venter J.C."/>
        </authorList>
    </citation>
    <scope>NUCLEOTIDE SEQUENCE [LARGE SCALE GENOMIC DNA]</scope>
    <source>
        <strain>Berkeley</strain>
    </source>
</reference>
<reference key="2">
    <citation type="journal article" date="2002" name="Genome Biol.">
        <title>Annotation of the Drosophila melanogaster euchromatic genome: a systematic review.</title>
        <authorList>
            <person name="Misra S."/>
            <person name="Crosby M.A."/>
            <person name="Mungall C.J."/>
            <person name="Matthews B.B."/>
            <person name="Campbell K.S."/>
            <person name="Hradecky P."/>
            <person name="Huang Y."/>
            <person name="Kaminker J.S."/>
            <person name="Millburn G.H."/>
            <person name="Prochnik S.E."/>
            <person name="Smith C.D."/>
            <person name="Tupy J.L."/>
            <person name="Whitfield E.J."/>
            <person name="Bayraktaroglu L."/>
            <person name="Berman B.P."/>
            <person name="Bettencourt B.R."/>
            <person name="Celniker S.E."/>
            <person name="de Grey A.D.N.J."/>
            <person name="Drysdale R.A."/>
            <person name="Harris N.L."/>
            <person name="Richter J."/>
            <person name="Russo S."/>
            <person name="Schroeder A.J."/>
            <person name="Shu S.Q."/>
            <person name="Stapleton M."/>
            <person name="Yamada C."/>
            <person name="Ashburner M."/>
            <person name="Gelbart W.M."/>
            <person name="Rubin G.M."/>
            <person name="Lewis S.E."/>
        </authorList>
    </citation>
    <scope>GENOME REANNOTATION</scope>
    <source>
        <strain>Berkeley</strain>
    </source>
</reference>
<reference key="3">
    <citation type="submission" date="2004-01" db="EMBL/GenBank/DDBJ databases">
        <authorList>
            <person name="Stapleton M."/>
            <person name="Carlson J.W."/>
            <person name="Chavez C."/>
            <person name="Frise E."/>
            <person name="George R.A."/>
            <person name="Pacleb J.M."/>
            <person name="Park S."/>
            <person name="Wan K.H."/>
            <person name="Yu C."/>
            <person name="Rubin G.M."/>
            <person name="Celniker S.E."/>
        </authorList>
    </citation>
    <scope>NUCLEOTIDE SEQUENCE [LARGE SCALE MRNA]</scope>
    <source>
        <strain>Berkeley</strain>
        <tissue>Embryo</tissue>
    </source>
</reference>
<gene>
    <name type="ORF">CG33331</name>
    <name type="ORF">CG3641</name>
</gene>
<dbReference type="EC" id="2.7.7.41" evidence="1"/>
<dbReference type="EMBL" id="AE014297">
    <property type="protein sequence ID" value="AAN13621.1"/>
    <property type="molecule type" value="Genomic_DNA"/>
</dbReference>
<dbReference type="EMBL" id="BT011333">
    <property type="protein sequence ID" value="AAR96125.1"/>
    <property type="molecule type" value="mRNA"/>
</dbReference>
<dbReference type="EMBL" id="BT011484">
    <property type="protein sequence ID" value="AAR99142.1"/>
    <property type="molecule type" value="mRNA"/>
</dbReference>
<dbReference type="RefSeq" id="NP_996213.1">
    <property type="nucleotide sequence ID" value="NM_206491.3"/>
</dbReference>
<dbReference type="SMR" id="Q8INF2"/>
<dbReference type="FunCoup" id="Q8INF2">
    <property type="interactions" value="1461"/>
</dbReference>
<dbReference type="STRING" id="7227.FBpp0082457"/>
<dbReference type="PaxDb" id="7227-FBpp0082457"/>
<dbReference type="DNASU" id="2768668"/>
<dbReference type="EnsemblMetazoa" id="FBtr0082998">
    <property type="protein sequence ID" value="FBpp0082457"/>
    <property type="gene ID" value="FBgn0067628"/>
</dbReference>
<dbReference type="GeneID" id="2768668"/>
<dbReference type="KEGG" id="dme:Dmel_CG33331"/>
<dbReference type="UCSC" id="CG33331-RA">
    <property type="organism name" value="d. melanogaster"/>
</dbReference>
<dbReference type="AGR" id="FB:FBgn0067628"/>
<dbReference type="FlyBase" id="FBgn0067628">
    <property type="gene designation" value="CG33331"/>
</dbReference>
<dbReference type="VEuPathDB" id="VectorBase:FBgn0067628"/>
<dbReference type="eggNOG" id="KOG2986">
    <property type="taxonomic scope" value="Eukaryota"/>
</dbReference>
<dbReference type="GeneTree" id="ENSGT00390000000616"/>
<dbReference type="HOGENOM" id="CLU_030279_1_1_1"/>
<dbReference type="InParanoid" id="Q8INF2"/>
<dbReference type="OMA" id="HAENMHR"/>
<dbReference type="OrthoDB" id="341477at2759"/>
<dbReference type="PhylomeDB" id="Q8INF2"/>
<dbReference type="UniPathway" id="UPA00557">
    <property type="reaction ID" value="UER00614"/>
</dbReference>
<dbReference type="BioGRID-ORCS" id="2768668">
    <property type="hits" value="1 hit in 1 CRISPR screen"/>
</dbReference>
<dbReference type="ChiTaRS" id="CG33332">
    <property type="organism name" value="fly"/>
</dbReference>
<dbReference type="GenomeRNAi" id="2768668"/>
<dbReference type="PRO" id="PR:Q8INF2"/>
<dbReference type="Proteomes" id="UP000000803">
    <property type="component" value="Chromosome 3R"/>
</dbReference>
<dbReference type="Bgee" id="FBgn0067628">
    <property type="expression patterns" value="Expressed in adult antennal lobe projection neuron adPN (Drosophila) in brain and 35 other cell types or tissues"/>
</dbReference>
<dbReference type="GO" id="GO:0005743">
    <property type="term" value="C:mitochondrial inner membrane"/>
    <property type="evidence" value="ECO:0007669"/>
    <property type="project" value="UniProtKB-SubCell"/>
</dbReference>
<dbReference type="GO" id="GO:0005739">
    <property type="term" value="C:mitochondrion"/>
    <property type="evidence" value="ECO:0000318"/>
    <property type="project" value="GO_Central"/>
</dbReference>
<dbReference type="GO" id="GO:0004605">
    <property type="term" value="F:phosphatidate cytidylyltransferase activity"/>
    <property type="evidence" value="ECO:0000250"/>
    <property type="project" value="UniProtKB"/>
</dbReference>
<dbReference type="GO" id="GO:0032049">
    <property type="term" value="P:cardiolipin biosynthetic process"/>
    <property type="evidence" value="ECO:0000250"/>
    <property type="project" value="UniProtKB"/>
</dbReference>
<dbReference type="GO" id="GO:0016024">
    <property type="term" value="P:CDP-diacylglycerol biosynthetic process"/>
    <property type="evidence" value="ECO:0000318"/>
    <property type="project" value="GO_Central"/>
</dbReference>
<dbReference type="InterPro" id="IPR015222">
    <property type="entry name" value="Tam41"/>
</dbReference>
<dbReference type="PANTHER" id="PTHR13619">
    <property type="entry name" value="PHOSPHATIDATE CYTIDYLYLTRANSFERASE, MITOCHONDRIAL"/>
    <property type="match status" value="1"/>
</dbReference>
<dbReference type="PANTHER" id="PTHR13619:SF0">
    <property type="entry name" value="PHOSPHATIDATE CYTIDYLYLTRANSFERASE, MITOCHONDRIAL"/>
    <property type="match status" value="1"/>
</dbReference>
<dbReference type="Pfam" id="PF09139">
    <property type="entry name" value="Tam41_Mmp37"/>
    <property type="match status" value="1"/>
</dbReference>
<dbReference type="PIRSF" id="PIRSF028840">
    <property type="entry name" value="Mmp37"/>
    <property type="match status" value="1"/>
</dbReference>
<name>TAM41_DROME</name>
<proteinExistence type="evidence at transcript level"/>
<organism>
    <name type="scientific">Drosophila melanogaster</name>
    <name type="common">Fruit fly</name>
    <dbReference type="NCBI Taxonomy" id="7227"/>
    <lineage>
        <taxon>Eukaryota</taxon>
        <taxon>Metazoa</taxon>
        <taxon>Ecdysozoa</taxon>
        <taxon>Arthropoda</taxon>
        <taxon>Hexapoda</taxon>
        <taxon>Insecta</taxon>
        <taxon>Pterygota</taxon>
        <taxon>Neoptera</taxon>
        <taxon>Endopterygota</taxon>
        <taxon>Diptera</taxon>
        <taxon>Brachycera</taxon>
        <taxon>Muscomorpha</taxon>
        <taxon>Ephydroidea</taxon>
        <taxon>Drosophilidae</taxon>
        <taxon>Drosophila</taxon>
        <taxon>Sophophora</taxon>
    </lineage>
</organism>
<feature type="chain" id="PRO_0000248360" description="Phosphatidate cytidylyltransferase, mitochondrial">
    <location>
        <begin position="1"/>
        <end position="342"/>
    </location>
</feature>
<feature type="sequence conflict" description="In Ref. 3; AAR99142." evidence="3" ref="3">
    <original>F</original>
    <variation>L</variation>
    <location>
        <position position="182"/>
    </location>
</feature>
<feature type="sequence conflict" description="In Ref. 3; AAR99142." evidence="3" ref="3">
    <original>A</original>
    <variation>S</variation>
    <location>
        <position position="330"/>
    </location>
</feature>
<evidence type="ECO:0000250" key="1">
    <source>
        <dbReference type="UniProtKB" id="D3ZKT0"/>
    </source>
</evidence>
<evidence type="ECO:0000250" key="2">
    <source>
        <dbReference type="UniProtKB" id="P53230"/>
    </source>
</evidence>
<evidence type="ECO:0000305" key="3"/>
<comment type="function">
    <text evidence="2">Catalyzes the formation of CDP-diacylglycerol (CDP-DAG) from phosphatidic acid (PA) in the mitochondrial inner membrane. Required for the biosynthesis of the dimeric phospholipid cardiolipin, which stabilizes supercomplexes of the mitochondrial respiratory chain in the mitochondrial inner membrane.</text>
</comment>
<comment type="catalytic activity">
    <reaction evidence="2">
        <text>a 1,2-diacyl-sn-glycero-3-phosphate + CTP + H(+) = a CDP-1,2-diacyl-sn-glycerol + diphosphate</text>
        <dbReference type="Rhea" id="RHEA:16229"/>
        <dbReference type="ChEBI" id="CHEBI:15378"/>
        <dbReference type="ChEBI" id="CHEBI:33019"/>
        <dbReference type="ChEBI" id="CHEBI:37563"/>
        <dbReference type="ChEBI" id="CHEBI:58332"/>
        <dbReference type="ChEBI" id="CHEBI:58608"/>
        <dbReference type="EC" id="2.7.7.41"/>
    </reaction>
    <physiologicalReaction direction="left-to-right" evidence="2">
        <dbReference type="Rhea" id="RHEA:16230"/>
    </physiologicalReaction>
</comment>
<comment type="cofactor">
    <cofactor evidence="2">
        <name>Mg(2+)</name>
        <dbReference type="ChEBI" id="CHEBI:18420"/>
    </cofactor>
    <cofactor evidence="2">
        <name>Co(2+)</name>
        <dbReference type="ChEBI" id="CHEBI:48828"/>
    </cofactor>
    <cofactor evidence="2">
        <name>Cu(2+)</name>
        <dbReference type="ChEBI" id="CHEBI:29036"/>
    </cofactor>
    <text evidence="2">Magnesium. Also active with cobalt or copper.</text>
</comment>
<comment type="pathway">
    <text evidence="2">Phospholipid metabolism; CDP-diacylglycerol biosynthesis; CDP-diacylglycerol from sn-glycerol 3-phosphate: step 3/3.</text>
</comment>
<comment type="subcellular location">
    <subcellularLocation>
        <location evidence="2">Mitochondrion inner membrane</location>
        <topology evidence="2">Peripheral membrane protein</topology>
        <orientation evidence="2">Matrix side</orientation>
    </subcellularLocation>
</comment>
<comment type="similarity">
    <text evidence="3">Belongs to the TAM41 family.</text>
</comment>
<keyword id="KW-0444">Lipid biosynthesis</keyword>
<keyword id="KW-0443">Lipid metabolism</keyword>
<keyword id="KW-0460">Magnesium</keyword>
<keyword id="KW-0472">Membrane</keyword>
<keyword id="KW-0496">Mitochondrion</keyword>
<keyword id="KW-0999">Mitochondrion inner membrane</keyword>
<keyword id="KW-0548">Nucleotidyltransferase</keyword>
<keyword id="KW-0594">Phospholipid biosynthesis</keyword>
<keyword id="KW-1208">Phospholipid metabolism</keyword>
<keyword id="KW-1185">Reference proteome</keyword>
<keyword id="KW-0808">Transferase</keyword>
<accession>Q8INF2</accession>
<accession>Q6NN16</accession>
<protein>
    <recommendedName>
        <fullName>Phosphatidate cytidylyltransferase, mitochondrial</fullName>
        <ecNumber evidence="1">2.7.7.41</ecNumber>
    </recommendedName>
    <alternativeName>
        <fullName>CDP-diacylglycerol synthase</fullName>
        <shortName>CDP-DAG synthase</shortName>
    </alternativeName>
    <alternativeName>
        <fullName>Mitochondrial translocator assembly and maintenance protein 41 homolog</fullName>
        <shortName>TAM41</shortName>
    </alternativeName>
</protein>
<sequence length="342" mass="38219">MLDLYRRTVARFPLGSVSYMFAYGSGVKQQEGYGKVGNGNNLRPPPGTVVDLVFCVRDARGFHAENLHRHPDHYSALRHLGPNFVAKYQERLGAGVYCNTLVPLPDVGITIKYGVVSQEELLEDLLDWRHLYLAGRLHKPVTNLVNPSDNPPLKAALERNLVSALQVALLLLPEKFTAYGLFHTIAGLSYKGDFRMIFGENKQKVHNIVSPQINDFFALYQPSLGQLSDYVAVNMKGQEPGSRKPAIIFEQDKSSSATCQHLRQLPRELQKRLQRNAACRGDYTQVVNHLSMASQLPEVLQASVNDIVWRSSVTQSIKNIPSAGILKSLAYSYRKAQKTFAV</sequence>